<sequence>MEGRITQVMGPVVDVDFDSYLPAINEALDVNYDIEGHPKKLVLEVAAHIGDSRVRTIAMDMTEGLTRGTKVVARGKSIEVPVGEQVLGRIFNVVGDVIDGGDELKEPVKWSIHRTAPTFENQSTKTEMFETGIKVVDLLAPYSKGGKVGLFGGAGVGKTVVIMELIHNVAFKHSGYSVFAGVGERTREGNDLYHEMKESGVLDKVALCYGQMNEPPGARNRIAFTGLTMAEYFRDEKGLDVLMFIDNIFRYAQSGAEMSALLGRIPSAVGYQPTLASEMGKLQERITSTKKGSITSVQAVYVPADDLTDPAPASVFAHLDATTVLNRKIAEKGIYPAVDPLDSTSRILDPQVVGEDHYKTATGVQQVLQKYKDLQDIIAILGMDELSEEDKRVVERARRIEKFLSQPFFVAEVFTGSPGKYVTLQETLEGFKGILEGKYDQIPENAFYMVGGIDEVLEKAERLKANA</sequence>
<evidence type="ECO:0000255" key="1">
    <source>
        <dbReference type="HAMAP-Rule" id="MF_01347"/>
    </source>
</evidence>
<name>ATPB_WOLSU</name>
<accession>P42470</accession>
<dbReference type="EC" id="7.1.2.2" evidence="1"/>
<dbReference type="EMBL" id="X76880">
    <property type="protein sequence ID" value="CAA54207.1"/>
    <property type="molecule type" value="Genomic_DNA"/>
</dbReference>
<dbReference type="EMBL" id="BX571658">
    <property type="protein sequence ID" value="CAE09653.1"/>
    <property type="molecule type" value="Genomic_DNA"/>
</dbReference>
<dbReference type="RefSeq" id="WP_011138453.1">
    <property type="nucleotide sequence ID" value="NC_005090.1"/>
</dbReference>
<dbReference type="SMR" id="P42470"/>
<dbReference type="STRING" id="273121.WS0516"/>
<dbReference type="KEGG" id="wsu:WS0516"/>
<dbReference type="eggNOG" id="COG0055">
    <property type="taxonomic scope" value="Bacteria"/>
</dbReference>
<dbReference type="HOGENOM" id="CLU_022398_0_2_7"/>
<dbReference type="Proteomes" id="UP000000422">
    <property type="component" value="Chromosome"/>
</dbReference>
<dbReference type="GO" id="GO:0005886">
    <property type="term" value="C:plasma membrane"/>
    <property type="evidence" value="ECO:0007669"/>
    <property type="project" value="UniProtKB-SubCell"/>
</dbReference>
<dbReference type="GO" id="GO:0045259">
    <property type="term" value="C:proton-transporting ATP synthase complex"/>
    <property type="evidence" value="ECO:0007669"/>
    <property type="project" value="UniProtKB-KW"/>
</dbReference>
<dbReference type="GO" id="GO:0005524">
    <property type="term" value="F:ATP binding"/>
    <property type="evidence" value="ECO:0007669"/>
    <property type="project" value="UniProtKB-UniRule"/>
</dbReference>
<dbReference type="GO" id="GO:0016887">
    <property type="term" value="F:ATP hydrolysis activity"/>
    <property type="evidence" value="ECO:0007669"/>
    <property type="project" value="InterPro"/>
</dbReference>
<dbReference type="GO" id="GO:0046933">
    <property type="term" value="F:proton-transporting ATP synthase activity, rotational mechanism"/>
    <property type="evidence" value="ECO:0007669"/>
    <property type="project" value="UniProtKB-UniRule"/>
</dbReference>
<dbReference type="CDD" id="cd18110">
    <property type="entry name" value="ATP-synt_F1_beta_C"/>
    <property type="match status" value="1"/>
</dbReference>
<dbReference type="CDD" id="cd18115">
    <property type="entry name" value="ATP-synt_F1_beta_N"/>
    <property type="match status" value="1"/>
</dbReference>
<dbReference type="CDD" id="cd01133">
    <property type="entry name" value="F1-ATPase_beta_CD"/>
    <property type="match status" value="1"/>
</dbReference>
<dbReference type="FunFam" id="1.10.1140.10:FF:000001">
    <property type="entry name" value="ATP synthase subunit beta"/>
    <property type="match status" value="1"/>
</dbReference>
<dbReference type="FunFam" id="3.40.50.300:FF:000004">
    <property type="entry name" value="ATP synthase subunit beta"/>
    <property type="match status" value="1"/>
</dbReference>
<dbReference type="Gene3D" id="2.40.10.170">
    <property type="match status" value="1"/>
</dbReference>
<dbReference type="Gene3D" id="1.10.1140.10">
    <property type="entry name" value="Bovine Mitochondrial F1-atpase, Atp Synthase Beta Chain, Chain D, domain 3"/>
    <property type="match status" value="1"/>
</dbReference>
<dbReference type="Gene3D" id="3.40.50.300">
    <property type="entry name" value="P-loop containing nucleotide triphosphate hydrolases"/>
    <property type="match status" value="1"/>
</dbReference>
<dbReference type="HAMAP" id="MF_01347">
    <property type="entry name" value="ATP_synth_beta_bact"/>
    <property type="match status" value="1"/>
</dbReference>
<dbReference type="InterPro" id="IPR003593">
    <property type="entry name" value="AAA+_ATPase"/>
</dbReference>
<dbReference type="InterPro" id="IPR055190">
    <property type="entry name" value="ATP-synt_VA_C"/>
</dbReference>
<dbReference type="InterPro" id="IPR005722">
    <property type="entry name" value="ATP_synth_F1_bsu"/>
</dbReference>
<dbReference type="InterPro" id="IPR020003">
    <property type="entry name" value="ATPase_a/bsu_AS"/>
</dbReference>
<dbReference type="InterPro" id="IPR050053">
    <property type="entry name" value="ATPase_alpha/beta_chains"/>
</dbReference>
<dbReference type="InterPro" id="IPR004100">
    <property type="entry name" value="ATPase_F1/V1/A1_a/bsu_N"/>
</dbReference>
<dbReference type="InterPro" id="IPR036121">
    <property type="entry name" value="ATPase_F1/V1/A1_a/bsu_N_sf"/>
</dbReference>
<dbReference type="InterPro" id="IPR000194">
    <property type="entry name" value="ATPase_F1/V1/A1_a/bsu_nucl-bd"/>
</dbReference>
<dbReference type="InterPro" id="IPR024034">
    <property type="entry name" value="ATPase_F1/V1_b/a_C"/>
</dbReference>
<dbReference type="InterPro" id="IPR027417">
    <property type="entry name" value="P-loop_NTPase"/>
</dbReference>
<dbReference type="NCBIfam" id="TIGR01039">
    <property type="entry name" value="atpD"/>
    <property type="match status" value="1"/>
</dbReference>
<dbReference type="PANTHER" id="PTHR15184">
    <property type="entry name" value="ATP SYNTHASE"/>
    <property type="match status" value="1"/>
</dbReference>
<dbReference type="PANTHER" id="PTHR15184:SF71">
    <property type="entry name" value="ATP SYNTHASE SUBUNIT BETA, MITOCHONDRIAL"/>
    <property type="match status" value="1"/>
</dbReference>
<dbReference type="Pfam" id="PF00006">
    <property type="entry name" value="ATP-synt_ab"/>
    <property type="match status" value="1"/>
</dbReference>
<dbReference type="Pfam" id="PF02874">
    <property type="entry name" value="ATP-synt_ab_N"/>
    <property type="match status" value="1"/>
</dbReference>
<dbReference type="Pfam" id="PF22919">
    <property type="entry name" value="ATP-synt_VA_C"/>
    <property type="match status" value="1"/>
</dbReference>
<dbReference type="SMART" id="SM00382">
    <property type="entry name" value="AAA"/>
    <property type="match status" value="1"/>
</dbReference>
<dbReference type="SUPFAM" id="SSF47917">
    <property type="entry name" value="C-terminal domain of alpha and beta subunits of F1 ATP synthase"/>
    <property type="match status" value="1"/>
</dbReference>
<dbReference type="SUPFAM" id="SSF50615">
    <property type="entry name" value="N-terminal domain of alpha and beta subunits of F1 ATP synthase"/>
    <property type="match status" value="1"/>
</dbReference>
<dbReference type="SUPFAM" id="SSF52540">
    <property type="entry name" value="P-loop containing nucleoside triphosphate hydrolases"/>
    <property type="match status" value="1"/>
</dbReference>
<dbReference type="PROSITE" id="PS00152">
    <property type="entry name" value="ATPASE_ALPHA_BETA"/>
    <property type="match status" value="1"/>
</dbReference>
<reference key="1">
    <citation type="journal article" date="1993" name="Antonie Van Leeuwenhoek">
        <title>Phylogenetic relationships of Bacteria based on comparative sequence analysis of elongation factor Tu and ATP-synthase beta-subunit genes.</title>
        <authorList>
            <person name="Ludwig W."/>
            <person name="Neumaier J."/>
            <person name="Klugbauer N."/>
            <person name="Brockmann E."/>
            <person name="Roller C."/>
            <person name="Klugbauer S."/>
            <person name="Reetz K."/>
            <person name="Schachtner I."/>
            <person name="Ludvigsen A."/>
            <person name="Bachleitner M."/>
            <person name="Fischer U."/>
            <person name="Schleifer K.H."/>
        </authorList>
    </citation>
    <scope>NUCLEOTIDE SEQUENCE [GENOMIC DNA]</scope>
    <source>
        <strain>ATCC 29543 / DSM 1740 / CCUG 13145 / JCM 31913 / LMG 7466 / NCTC 11488 / FDC 602W</strain>
    </source>
</reference>
<reference key="2">
    <citation type="journal article" date="2003" name="Proc. Natl. Acad. Sci. U.S.A.">
        <title>Complete genome sequence and analysis of Wolinella succinogenes.</title>
        <authorList>
            <person name="Baar C."/>
            <person name="Eppinger M."/>
            <person name="Raddatz G."/>
            <person name="Simon J."/>
            <person name="Lanz C."/>
            <person name="Klimmek O."/>
            <person name="Nandakumar R."/>
            <person name="Gross R."/>
            <person name="Rosinus A."/>
            <person name="Keller H."/>
            <person name="Jagtap P."/>
            <person name="Linke B."/>
            <person name="Meyer F."/>
            <person name="Lederer H."/>
            <person name="Schuster S.C."/>
        </authorList>
    </citation>
    <scope>NUCLEOTIDE SEQUENCE [LARGE SCALE GENOMIC DNA]</scope>
    <source>
        <strain>ATCC 29543 / DSM 1740 / CCUG 13145 / JCM 31913 / LMG 7466 / NCTC 11488 / FDC 602W</strain>
    </source>
</reference>
<proteinExistence type="inferred from homology"/>
<gene>
    <name evidence="1" type="primary">atpD</name>
    <name type="ordered locus">WS0516</name>
</gene>
<organism>
    <name type="scientific">Wolinella succinogenes (strain ATCC 29543 / DSM 1740 / CCUG 13145 / JCM 31913 / LMG 7466 / NCTC 11488 / FDC 602W)</name>
    <name type="common">Vibrio succinogenes</name>
    <dbReference type="NCBI Taxonomy" id="273121"/>
    <lineage>
        <taxon>Bacteria</taxon>
        <taxon>Pseudomonadati</taxon>
        <taxon>Campylobacterota</taxon>
        <taxon>Epsilonproteobacteria</taxon>
        <taxon>Campylobacterales</taxon>
        <taxon>Helicobacteraceae</taxon>
        <taxon>Wolinella</taxon>
    </lineage>
</organism>
<comment type="function">
    <text evidence="1">Produces ATP from ADP in the presence of a proton gradient across the membrane. The catalytic sites are hosted primarily by the beta subunits.</text>
</comment>
<comment type="catalytic activity">
    <reaction evidence="1">
        <text>ATP + H2O + 4 H(+)(in) = ADP + phosphate + 5 H(+)(out)</text>
        <dbReference type="Rhea" id="RHEA:57720"/>
        <dbReference type="ChEBI" id="CHEBI:15377"/>
        <dbReference type="ChEBI" id="CHEBI:15378"/>
        <dbReference type="ChEBI" id="CHEBI:30616"/>
        <dbReference type="ChEBI" id="CHEBI:43474"/>
        <dbReference type="ChEBI" id="CHEBI:456216"/>
        <dbReference type="EC" id="7.1.2.2"/>
    </reaction>
</comment>
<comment type="subunit">
    <text evidence="1">F-type ATPases have 2 components, CF(1) - the catalytic core - and CF(0) - the membrane proton channel. CF(1) has five subunits: alpha(3), beta(3), gamma(1), delta(1), epsilon(1). CF(0) has three main subunits: a(1), b(2) and c(9-12). The alpha and beta chains form an alternating ring which encloses part of the gamma chain. CF(1) is attached to CF(0) by a central stalk formed by the gamma and epsilon chains, while a peripheral stalk is formed by the delta and b chains.</text>
</comment>
<comment type="subcellular location">
    <subcellularLocation>
        <location evidence="1">Cell inner membrane</location>
        <topology evidence="1">Peripheral membrane protein</topology>
    </subcellularLocation>
</comment>
<comment type="similarity">
    <text evidence="1">Belongs to the ATPase alpha/beta chains family.</text>
</comment>
<protein>
    <recommendedName>
        <fullName evidence="1">ATP synthase subunit beta</fullName>
        <ecNumber evidence="1">7.1.2.2</ecNumber>
    </recommendedName>
    <alternativeName>
        <fullName evidence="1">ATP synthase F1 sector subunit beta</fullName>
    </alternativeName>
    <alternativeName>
        <fullName evidence="1">F-ATPase subunit beta</fullName>
    </alternativeName>
</protein>
<feature type="chain" id="PRO_0000144488" description="ATP synthase subunit beta">
    <location>
        <begin position="1"/>
        <end position="467"/>
    </location>
</feature>
<feature type="binding site" evidence="1">
    <location>
        <begin position="152"/>
        <end position="159"/>
    </location>
    <ligand>
        <name>ATP</name>
        <dbReference type="ChEBI" id="CHEBI:30616"/>
    </ligand>
</feature>
<keyword id="KW-0066">ATP synthesis</keyword>
<keyword id="KW-0067">ATP-binding</keyword>
<keyword id="KW-0997">Cell inner membrane</keyword>
<keyword id="KW-1003">Cell membrane</keyword>
<keyword id="KW-0139">CF(1)</keyword>
<keyword id="KW-0375">Hydrogen ion transport</keyword>
<keyword id="KW-0406">Ion transport</keyword>
<keyword id="KW-0472">Membrane</keyword>
<keyword id="KW-0547">Nucleotide-binding</keyword>
<keyword id="KW-1185">Reference proteome</keyword>
<keyword id="KW-1278">Translocase</keyword>
<keyword id="KW-0813">Transport</keyword>